<keyword id="KW-0066">ATP synthesis</keyword>
<keyword id="KW-0067">ATP-binding</keyword>
<keyword id="KW-0139">CF(1)</keyword>
<keyword id="KW-0375">Hydrogen ion transport</keyword>
<keyword id="KW-0406">Ion transport</keyword>
<keyword id="KW-0472">Membrane</keyword>
<keyword id="KW-0547">Nucleotide-binding</keyword>
<keyword id="KW-0793">Thylakoid</keyword>
<keyword id="KW-1278">Translocase</keyword>
<keyword id="KW-0813">Transport</keyword>
<comment type="function">
    <text evidence="2">Produces ATP from ADP in the presence of a proton gradient across the membrane. The alpha chain is a regulatory subunit.</text>
</comment>
<comment type="catalytic activity">
    <reaction evidence="2">
        <text>ATP + H2O + 4 H(+)(in) = ADP + phosphate + 5 H(+)(out)</text>
        <dbReference type="Rhea" id="RHEA:57720"/>
        <dbReference type="ChEBI" id="CHEBI:15377"/>
        <dbReference type="ChEBI" id="CHEBI:15378"/>
        <dbReference type="ChEBI" id="CHEBI:30616"/>
        <dbReference type="ChEBI" id="CHEBI:43474"/>
        <dbReference type="ChEBI" id="CHEBI:456216"/>
        <dbReference type="EC" id="7.1.2.2"/>
    </reaction>
</comment>
<comment type="subunit">
    <text evidence="1">F-type ATPases have 2 components, CF(1) - the catalytic core - and CF(0) - the membrane proton channel. CF(1) has five subunits: alpha(3), beta(3), gamma(1), delta(1), epsilon(1). CF(0) has four main subunits: a(1), b(1), b'(1) and c(9-12) (By similarity).</text>
</comment>
<comment type="subcellular location">
    <subcellularLocation>
        <location evidence="2">Cellular thylakoid membrane</location>
        <topology evidence="2">Peripheral membrane protein</topology>
    </subcellularLocation>
</comment>
<comment type="similarity">
    <text evidence="2">Belongs to the ATPase alpha/beta chains family.</text>
</comment>
<gene>
    <name evidence="2" type="primary">atpA</name>
    <name type="ordered locus">NATL1_18491</name>
</gene>
<feature type="chain" id="PRO_0000302688" description="ATP synthase subunit alpha">
    <location>
        <begin position="1"/>
        <end position="504"/>
    </location>
</feature>
<feature type="binding site" evidence="2">
    <location>
        <begin position="170"/>
        <end position="177"/>
    </location>
    <ligand>
        <name>ATP</name>
        <dbReference type="ChEBI" id="CHEBI:30616"/>
    </ligand>
</feature>
<feature type="site" description="Required for activity" evidence="2">
    <location>
        <position position="363"/>
    </location>
</feature>
<proteinExistence type="inferred from homology"/>
<name>ATPA_PROM1</name>
<dbReference type="EC" id="7.1.2.2" evidence="2"/>
<dbReference type="EMBL" id="CP000553">
    <property type="protein sequence ID" value="ABM76405.1"/>
    <property type="molecule type" value="Genomic_DNA"/>
</dbReference>
<dbReference type="RefSeq" id="WP_011824391.1">
    <property type="nucleotide sequence ID" value="NC_008819.1"/>
</dbReference>
<dbReference type="SMR" id="A2C4J5"/>
<dbReference type="KEGG" id="pme:NATL1_18491"/>
<dbReference type="eggNOG" id="COG0056">
    <property type="taxonomic scope" value="Bacteria"/>
</dbReference>
<dbReference type="HOGENOM" id="CLU_010091_2_1_3"/>
<dbReference type="Proteomes" id="UP000002592">
    <property type="component" value="Chromosome"/>
</dbReference>
<dbReference type="GO" id="GO:0031676">
    <property type="term" value="C:plasma membrane-derived thylakoid membrane"/>
    <property type="evidence" value="ECO:0007669"/>
    <property type="project" value="UniProtKB-SubCell"/>
</dbReference>
<dbReference type="GO" id="GO:0045259">
    <property type="term" value="C:proton-transporting ATP synthase complex"/>
    <property type="evidence" value="ECO:0007669"/>
    <property type="project" value="UniProtKB-KW"/>
</dbReference>
<dbReference type="GO" id="GO:0043531">
    <property type="term" value="F:ADP binding"/>
    <property type="evidence" value="ECO:0007669"/>
    <property type="project" value="TreeGrafter"/>
</dbReference>
<dbReference type="GO" id="GO:0005524">
    <property type="term" value="F:ATP binding"/>
    <property type="evidence" value="ECO:0007669"/>
    <property type="project" value="UniProtKB-UniRule"/>
</dbReference>
<dbReference type="GO" id="GO:0046933">
    <property type="term" value="F:proton-transporting ATP synthase activity, rotational mechanism"/>
    <property type="evidence" value="ECO:0007669"/>
    <property type="project" value="UniProtKB-UniRule"/>
</dbReference>
<dbReference type="CDD" id="cd18113">
    <property type="entry name" value="ATP-synt_F1_alpha_C"/>
    <property type="match status" value="1"/>
</dbReference>
<dbReference type="CDD" id="cd18116">
    <property type="entry name" value="ATP-synt_F1_alpha_N"/>
    <property type="match status" value="1"/>
</dbReference>
<dbReference type="CDD" id="cd01132">
    <property type="entry name" value="F1-ATPase_alpha_CD"/>
    <property type="match status" value="1"/>
</dbReference>
<dbReference type="FunFam" id="1.20.150.20:FF:000001">
    <property type="entry name" value="ATP synthase subunit alpha"/>
    <property type="match status" value="1"/>
</dbReference>
<dbReference type="FunFam" id="2.40.30.20:FF:000001">
    <property type="entry name" value="ATP synthase subunit alpha"/>
    <property type="match status" value="1"/>
</dbReference>
<dbReference type="FunFam" id="3.40.50.300:FF:000002">
    <property type="entry name" value="ATP synthase subunit alpha"/>
    <property type="match status" value="1"/>
</dbReference>
<dbReference type="Gene3D" id="2.40.30.20">
    <property type="match status" value="1"/>
</dbReference>
<dbReference type="Gene3D" id="1.20.150.20">
    <property type="entry name" value="ATP synthase alpha/beta chain, C-terminal domain"/>
    <property type="match status" value="1"/>
</dbReference>
<dbReference type="Gene3D" id="3.40.50.300">
    <property type="entry name" value="P-loop containing nucleotide triphosphate hydrolases"/>
    <property type="match status" value="1"/>
</dbReference>
<dbReference type="HAMAP" id="MF_01346">
    <property type="entry name" value="ATP_synth_alpha_bact"/>
    <property type="match status" value="1"/>
</dbReference>
<dbReference type="InterPro" id="IPR023366">
    <property type="entry name" value="ATP_synth_asu-like_sf"/>
</dbReference>
<dbReference type="InterPro" id="IPR000793">
    <property type="entry name" value="ATP_synth_asu_C"/>
</dbReference>
<dbReference type="InterPro" id="IPR038376">
    <property type="entry name" value="ATP_synth_asu_C_sf"/>
</dbReference>
<dbReference type="InterPro" id="IPR033732">
    <property type="entry name" value="ATP_synth_F1_a_nt-bd_dom"/>
</dbReference>
<dbReference type="InterPro" id="IPR005294">
    <property type="entry name" value="ATP_synth_F1_asu"/>
</dbReference>
<dbReference type="InterPro" id="IPR020003">
    <property type="entry name" value="ATPase_a/bsu_AS"/>
</dbReference>
<dbReference type="InterPro" id="IPR004100">
    <property type="entry name" value="ATPase_F1/V1/A1_a/bsu_N"/>
</dbReference>
<dbReference type="InterPro" id="IPR036121">
    <property type="entry name" value="ATPase_F1/V1/A1_a/bsu_N_sf"/>
</dbReference>
<dbReference type="InterPro" id="IPR000194">
    <property type="entry name" value="ATPase_F1/V1/A1_a/bsu_nucl-bd"/>
</dbReference>
<dbReference type="InterPro" id="IPR027417">
    <property type="entry name" value="P-loop_NTPase"/>
</dbReference>
<dbReference type="NCBIfam" id="TIGR00962">
    <property type="entry name" value="atpA"/>
    <property type="match status" value="1"/>
</dbReference>
<dbReference type="NCBIfam" id="NF009884">
    <property type="entry name" value="PRK13343.1"/>
    <property type="match status" value="1"/>
</dbReference>
<dbReference type="PANTHER" id="PTHR48082">
    <property type="entry name" value="ATP SYNTHASE SUBUNIT ALPHA, MITOCHONDRIAL"/>
    <property type="match status" value="1"/>
</dbReference>
<dbReference type="PANTHER" id="PTHR48082:SF2">
    <property type="entry name" value="ATP SYNTHASE SUBUNIT ALPHA, MITOCHONDRIAL"/>
    <property type="match status" value="1"/>
</dbReference>
<dbReference type="Pfam" id="PF00006">
    <property type="entry name" value="ATP-synt_ab"/>
    <property type="match status" value="1"/>
</dbReference>
<dbReference type="Pfam" id="PF00306">
    <property type="entry name" value="ATP-synt_ab_C"/>
    <property type="match status" value="1"/>
</dbReference>
<dbReference type="Pfam" id="PF02874">
    <property type="entry name" value="ATP-synt_ab_N"/>
    <property type="match status" value="1"/>
</dbReference>
<dbReference type="PIRSF" id="PIRSF039088">
    <property type="entry name" value="F_ATPase_subunit_alpha"/>
    <property type="match status" value="1"/>
</dbReference>
<dbReference type="SUPFAM" id="SSF47917">
    <property type="entry name" value="C-terminal domain of alpha and beta subunits of F1 ATP synthase"/>
    <property type="match status" value="1"/>
</dbReference>
<dbReference type="SUPFAM" id="SSF50615">
    <property type="entry name" value="N-terminal domain of alpha and beta subunits of F1 ATP synthase"/>
    <property type="match status" value="1"/>
</dbReference>
<dbReference type="SUPFAM" id="SSF52540">
    <property type="entry name" value="P-loop containing nucleoside triphosphate hydrolases"/>
    <property type="match status" value="1"/>
</dbReference>
<dbReference type="PROSITE" id="PS00152">
    <property type="entry name" value="ATPASE_ALPHA_BETA"/>
    <property type="match status" value="1"/>
</dbReference>
<protein>
    <recommendedName>
        <fullName evidence="2">ATP synthase subunit alpha</fullName>
        <ecNumber evidence="2">7.1.2.2</ecNumber>
    </recommendedName>
    <alternativeName>
        <fullName evidence="2">ATP synthase F1 sector subunit alpha</fullName>
    </alternativeName>
    <alternativeName>
        <fullName evidence="2">F-ATPase subunit alpha</fullName>
    </alternativeName>
</protein>
<evidence type="ECO:0000250" key="1"/>
<evidence type="ECO:0000255" key="2">
    <source>
        <dbReference type="HAMAP-Rule" id="MF_01346"/>
    </source>
</evidence>
<sequence>MVSIRPDEISSILKQQIADYDKSVSVSNVGTVLQIGDGIARVYGLEKVMAGELVEFEDGTEGIALNLEDDNVGVVLMGEALGVQEGSTVKATGKIASVPVGEAMLGRVVNPLGQQIDGKGEIATTDTRLIESIAPGIIKRKSVHEPMQTGITSIDAMIPIGRGQRELIIGDRQTGKTAIAIDTIINQKGQDVVCVYVAVGQKQASVANVVEVLKEKGALDYTIIVNAGASEAAALQYLAPYTGAAIAEHFMYQGKATLVIYDDLTKQAQAYRQMSLLLRRPLGREAYPGDVFYCHSRLLERAAKLSDAMGAGSMTSLPIIETQAGDVSAYIPTNVISITDGQIFLSSDLFNSGLRPAINVGISVSRVGGAAQTKAIKKIAGTLKLELAQFDELAAFSQFASDLDEATQKQLGRGKRLRELLKQPQFDPLNLAEQVAIVYAGVKGLIDEVPEEKVVNFARELRDYLKTNKADFLKNVLSEKVLSEASESMLKDAISEVKSSMLAA</sequence>
<reference key="1">
    <citation type="journal article" date="2007" name="PLoS Genet.">
        <title>Patterns and implications of gene gain and loss in the evolution of Prochlorococcus.</title>
        <authorList>
            <person name="Kettler G.C."/>
            <person name="Martiny A.C."/>
            <person name="Huang K."/>
            <person name="Zucker J."/>
            <person name="Coleman M.L."/>
            <person name="Rodrigue S."/>
            <person name="Chen F."/>
            <person name="Lapidus A."/>
            <person name="Ferriera S."/>
            <person name="Johnson J."/>
            <person name="Steglich C."/>
            <person name="Church G.M."/>
            <person name="Richardson P."/>
            <person name="Chisholm S.W."/>
        </authorList>
    </citation>
    <scope>NUCLEOTIDE SEQUENCE [LARGE SCALE GENOMIC DNA]</scope>
    <source>
        <strain>NATL1A</strain>
    </source>
</reference>
<organism>
    <name type="scientific">Prochlorococcus marinus (strain NATL1A)</name>
    <dbReference type="NCBI Taxonomy" id="167555"/>
    <lineage>
        <taxon>Bacteria</taxon>
        <taxon>Bacillati</taxon>
        <taxon>Cyanobacteriota</taxon>
        <taxon>Cyanophyceae</taxon>
        <taxon>Synechococcales</taxon>
        <taxon>Prochlorococcaceae</taxon>
        <taxon>Prochlorococcus</taxon>
    </lineage>
</organism>
<accession>A2C4J5</accession>